<geneLocation type="plasmid">
    <name>IncP-alpha RK2</name>
</geneLocation>
<dbReference type="EMBL" id="L27758">
    <property type="status" value="NOT_ANNOTATED_CDS"/>
    <property type="molecule type" value="Genomic_DNA"/>
</dbReference>
<dbReference type="EMBL" id="U05773">
    <property type="protein sequence ID" value="AAA57449.1"/>
    <property type="molecule type" value="Genomic_DNA"/>
</dbReference>
<dbReference type="PIR" id="B55857">
    <property type="entry name" value="B55857"/>
</dbReference>
<dbReference type="DIP" id="DIP-28119N"/>
<dbReference type="GO" id="GO:0003677">
    <property type="term" value="F:DNA binding"/>
    <property type="evidence" value="ECO:0007669"/>
    <property type="project" value="UniProtKB-KW"/>
</dbReference>
<proteinExistence type="evidence at transcript level"/>
<comment type="induction">
    <text>Expression is decreased in the presence of KorA and KorC.</text>
</comment>
<comment type="domain">
    <text>Contains a DNA-binding region joined by a short variable segment to a region similar to E.coli korA and trbA.</text>
</comment>
<gene>
    <name type="primary">klcB</name>
</gene>
<keyword id="KW-0238">DNA-binding</keyword>
<keyword id="KW-0614">Plasmid</keyword>
<keyword id="KW-0804">Transcription</keyword>
<keyword id="KW-0805">Transcription regulation</keyword>
<sequence length="461" mass="51166">MQDDNIKRRNDAIVAGRLFSGSVQDRETERCHHCGELLHPFPEPEYWMQYPLPTCCVLDGLKFCDDYRKPDCIAAYLVANPTPPEATTPAARRRTKARKSKPQTEDKDARIAALAATLPEDRAGLLAVAADAVAAVHDAVLNRADLVADVAGERYAAAVWKLNGGTFFGCAGDQDAAERVIERHCRATPGVVPMWGQEGDFLASVDGMRVWVEVESGYGGLTTVHFQFHAVDLDGPFISETGYRSHYDHARGGMTVDQVADGVLRALLRSHRRYLDARDQDRLADEPLPAWLAGITPPPRRVRAVVEDWRKPDELPPGFAWVDAVLPAHQAFIARKWAASAKAKLAAARAKAQEPAGQRREPVTPAKPEPEPAKDEDAPAWPATFFPGLRCEIVSVHHPVFAKEIGKHVIITKISPETRQVWAHDDKPPRYRINRNGRKVCEYDPRCIESCYGYDQLRAAI</sequence>
<name>KLCB2_ECOLX</name>
<reference key="1">
    <citation type="journal article" date="1994" name="J. Mol. Biol.">
        <title>Complete nucleotide sequence of Birmingham IncP alpha plasmids. Compilation and comparative analysis.</title>
        <authorList>
            <person name="Pansegrau W."/>
            <person name="Lanka E."/>
            <person name="Barth P.T."/>
            <person name="Figurski D.H."/>
            <person name="Guiney D.G."/>
            <person name="Haas D."/>
            <person name="Helinski D.R."/>
            <person name="Schwab H."/>
            <person name="Stanisich V.A."/>
            <person name="Thomas C.M."/>
        </authorList>
    </citation>
    <scope>NUCLEOTIDE SEQUENCE [GENOMIC DNA]</scope>
</reference>
<reference key="2">
    <citation type="journal article" date="1994" name="J. Bacteriol.">
        <title>Structure, expression, and regulation of the kilC operon of promiscuous IncP alpha plasmids.</title>
        <authorList>
            <person name="Larsen M.H."/>
            <person name="Figurski D.H."/>
        </authorList>
    </citation>
    <scope>NUCLEOTIDE SEQUENCE [GENOMIC DNA] OF 1-237</scope>
</reference>
<feature type="chain" id="PRO_0000068378" description="Protein KlcB">
    <location>
        <begin position="1"/>
        <end position="461"/>
    </location>
</feature>
<feature type="region of interest" description="Disordered" evidence="1">
    <location>
        <begin position="84"/>
        <end position="107"/>
    </location>
</feature>
<feature type="region of interest" description="Disordered" evidence="1">
    <location>
        <begin position="349"/>
        <end position="379"/>
    </location>
</feature>
<feature type="compositionally biased region" description="Basic residues" evidence="1">
    <location>
        <begin position="91"/>
        <end position="101"/>
    </location>
</feature>
<feature type="compositionally biased region" description="Basic and acidic residues" evidence="1">
    <location>
        <begin position="357"/>
        <end position="377"/>
    </location>
</feature>
<evidence type="ECO:0000256" key="1">
    <source>
        <dbReference type="SAM" id="MobiDB-lite"/>
    </source>
</evidence>
<accession>P52605</accession>
<organism>
    <name type="scientific">Escherichia coli</name>
    <dbReference type="NCBI Taxonomy" id="562"/>
    <lineage>
        <taxon>Bacteria</taxon>
        <taxon>Pseudomonadati</taxon>
        <taxon>Pseudomonadota</taxon>
        <taxon>Gammaproteobacteria</taxon>
        <taxon>Enterobacterales</taxon>
        <taxon>Enterobacteriaceae</taxon>
        <taxon>Escherichia</taxon>
    </lineage>
</organism>
<protein>
    <recommendedName>
        <fullName>Protein KlcB</fullName>
    </recommendedName>
</protein>